<accession>O54415</accession>
<proteinExistence type="inferred from homology"/>
<protein>
    <recommendedName>
        <fullName evidence="1">Malonate decarboxylase acyl carrier protein</fullName>
    </recommendedName>
    <alternativeName>
        <fullName evidence="1">Malonate decarboxylase subunit delta</fullName>
    </alternativeName>
</protein>
<name>MDCC_ACICA</name>
<gene>
    <name evidence="1" type="primary">mdcC</name>
</gene>
<keyword id="KW-0963">Cytoplasm</keyword>
<keyword id="KW-0597">Phosphoprotein</keyword>
<reference key="1">
    <citation type="journal article" date="1999" name="Eur. J. Biochem.">
        <title>Functional evaluation of the genes involved in malonate decarboxylation by Acinetobacter calcoaceticus.</title>
        <authorList>
            <person name="Koo J.H."/>
            <person name="Kim Y.S."/>
        </authorList>
    </citation>
    <scope>NUCLEOTIDE SEQUENCE [GENOMIC DNA]</scope>
</reference>
<evidence type="ECO:0000255" key="1">
    <source>
        <dbReference type="HAMAP-Rule" id="MF_00710"/>
    </source>
</evidence>
<feature type="chain" id="PRO_0000220282" description="Malonate decarboxylase acyl carrier protein">
    <location>
        <begin position="1"/>
        <end position="102"/>
    </location>
</feature>
<feature type="modified residue" description="O-(phosphoribosyl dephospho-coenzyme A)serine" evidence="1">
    <location>
        <position position="27"/>
    </location>
</feature>
<organism>
    <name type="scientific">Acinetobacter calcoaceticus</name>
    <dbReference type="NCBI Taxonomy" id="471"/>
    <lineage>
        <taxon>Bacteria</taxon>
        <taxon>Pseudomonadati</taxon>
        <taxon>Pseudomonadota</taxon>
        <taxon>Gammaproteobacteria</taxon>
        <taxon>Moraxellales</taxon>
        <taxon>Moraxellaceae</taxon>
        <taxon>Acinetobacter</taxon>
        <taxon>Acinetobacter calcoaceticus/baumannii complex</taxon>
    </lineage>
</organism>
<dbReference type="EMBL" id="AF121266">
    <property type="protein sequence ID" value="AAB97628.1"/>
    <property type="molecule type" value="Genomic_DNA"/>
</dbReference>
<dbReference type="SMR" id="O54415"/>
<dbReference type="BRENDA" id="4.1.1.88">
    <property type="organism ID" value="99"/>
</dbReference>
<dbReference type="GO" id="GO:0005737">
    <property type="term" value="C:cytoplasm"/>
    <property type="evidence" value="ECO:0007669"/>
    <property type="project" value="UniProtKB-SubCell"/>
</dbReference>
<dbReference type="GO" id="GO:0000036">
    <property type="term" value="F:acyl carrier activity"/>
    <property type="evidence" value="ECO:0007669"/>
    <property type="project" value="UniProtKB-UniRule"/>
</dbReference>
<dbReference type="HAMAP" id="MF_00710">
    <property type="entry name" value="Malonate_deCO2ase_dsu"/>
    <property type="match status" value="1"/>
</dbReference>
<dbReference type="InterPro" id="IPR023439">
    <property type="entry name" value="Mal_deCO2ase/Cit_lyase_ACP"/>
</dbReference>
<dbReference type="InterPro" id="IPR009662">
    <property type="entry name" value="Malonate_deCO2ase_dsu"/>
</dbReference>
<dbReference type="NCBIfam" id="TIGR03130">
    <property type="entry name" value="malonate_delta"/>
    <property type="match status" value="1"/>
</dbReference>
<dbReference type="Pfam" id="PF06857">
    <property type="entry name" value="ACP"/>
    <property type="match status" value="1"/>
</dbReference>
<sequence length="102" mass="11032">MEKLKFEIQSVPLTLEKAPVICGVVGSGNLEVLVSQHDQADVCQVEVTTSAVGFQHVWQSVLNEFAQRHAVAGLKLQLNDMGATPAVVNLRLSQAISMFKGE</sequence>
<comment type="function">
    <text evidence="1">Subunit of malonate decarboxylase, it is an acyl carrier protein to which acetyl and malonyl thioester residues are bound via a 2'-(5''-phosphoribosyl)-3'-dephospho-CoA prosthetic group and turn over during the catalytic mechanism.</text>
</comment>
<comment type="subcellular location">
    <subcellularLocation>
        <location evidence="1">Cytoplasm</location>
    </subcellularLocation>
</comment>
<comment type="PTM">
    <text evidence="1">Covalently binds the prosthetic group of malonate decarboxylase.</text>
</comment>
<comment type="similarity">
    <text evidence="1">Belongs to the MdcC family.</text>
</comment>